<dbReference type="EC" id="2.1.1.-" evidence="1"/>
<dbReference type="EMBL" id="AF412035">
    <property type="protein sequence ID" value="AAM62317.1"/>
    <property type="molecule type" value="mRNA"/>
</dbReference>
<dbReference type="EMBL" id="AK011005">
    <property type="protein sequence ID" value="BAB27324.1"/>
    <property type="molecule type" value="mRNA"/>
</dbReference>
<dbReference type="EMBL" id="AK151986">
    <property type="protein sequence ID" value="BAE30852.1"/>
    <property type="molecule type" value="mRNA"/>
</dbReference>
<dbReference type="CCDS" id="CCDS19732.2"/>
<dbReference type="RefSeq" id="NP_079651.2">
    <property type="nucleotide sequence ID" value="NM_025375.4"/>
</dbReference>
<dbReference type="SMR" id="Q9CY21"/>
<dbReference type="BioGRID" id="211241">
    <property type="interactions" value="7"/>
</dbReference>
<dbReference type="FunCoup" id="Q9CY21">
    <property type="interactions" value="3930"/>
</dbReference>
<dbReference type="STRING" id="10090.ENSMUSP00000083146"/>
<dbReference type="iPTMnet" id="Q9CY21"/>
<dbReference type="PhosphoSitePlus" id="Q9CY21"/>
<dbReference type="PaxDb" id="10090-ENSMUSP00000083146"/>
<dbReference type="ProteomicsDB" id="273717"/>
<dbReference type="Pumba" id="Q9CY21"/>
<dbReference type="Antibodypedia" id="28493">
    <property type="antibodies" value="147 antibodies from 25 providers"/>
</dbReference>
<dbReference type="DNASU" id="66138"/>
<dbReference type="Ensembl" id="ENSMUST00000085984.11">
    <property type="protein sequence ID" value="ENSMUSP00000083146.5"/>
    <property type="gene ID" value="ENSMUSG00000005378.18"/>
</dbReference>
<dbReference type="GeneID" id="66138"/>
<dbReference type="KEGG" id="mmu:66138"/>
<dbReference type="UCSC" id="uc008zxn.1">
    <property type="organism name" value="mouse"/>
</dbReference>
<dbReference type="AGR" id="MGI:1913388"/>
<dbReference type="CTD" id="114049"/>
<dbReference type="MGI" id="MGI:1913388">
    <property type="gene designation" value="Bud23"/>
</dbReference>
<dbReference type="VEuPathDB" id="HostDB:ENSMUSG00000005378"/>
<dbReference type="eggNOG" id="KOG1541">
    <property type="taxonomic scope" value="Eukaryota"/>
</dbReference>
<dbReference type="GeneTree" id="ENSGT00390000014737"/>
<dbReference type="InParanoid" id="Q9CY21"/>
<dbReference type="OMA" id="WIQEKKE"/>
<dbReference type="OrthoDB" id="2877at2759"/>
<dbReference type="PhylomeDB" id="Q9CY21"/>
<dbReference type="TreeFam" id="TF300750"/>
<dbReference type="Reactome" id="R-MMU-6791226">
    <property type="pathway name" value="Major pathway of rRNA processing in the nucleolus and cytosol"/>
</dbReference>
<dbReference type="BioGRID-ORCS" id="66138">
    <property type="hits" value="21 hits in 78 CRISPR screens"/>
</dbReference>
<dbReference type="ChiTaRS" id="Wbscr22">
    <property type="organism name" value="mouse"/>
</dbReference>
<dbReference type="PRO" id="PR:Q9CY21"/>
<dbReference type="Proteomes" id="UP000000589">
    <property type="component" value="Chromosome 5"/>
</dbReference>
<dbReference type="RNAct" id="Q9CY21">
    <property type="molecule type" value="protein"/>
</dbReference>
<dbReference type="Bgee" id="ENSMUSG00000005378">
    <property type="expression patterns" value="Expressed in epiblast (generic) and 74 other cell types or tissues"/>
</dbReference>
<dbReference type="ExpressionAtlas" id="Q9CY21">
    <property type="expression patterns" value="baseline and differential"/>
</dbReference>
<dbReference type="GO" id="GO:0005730">
    <property type="term" value="C:nucleolus"/>
    <property type="evidence" value="ECO:0007669"/>
    <property type="project" value="Ensembl"/>
</dbReference>
<dbReference type="GO" id="GO:0005654">
    <property type="term" value="C:nucleoplasm"/>
    <property type="evidence" value="ECO:0000250"/>
    <property type="project" value="UniProtKB"/>
</dbReference>
<dbReference type="GO" id="GO:0048471">
    <property type="term" value="C:perinuclear region of cytoplasm"/>
    <property type="evidence" value="ECO:0000250"/>
    <property type="project" value="UniProtKB"/>
</dbReference>
<dbReference type="GO" id="GO:0046982">
    <property type="term" value="F:protein heterodimerization activity"/>
    <property type="evidence" value="ECO:0000250"/>
    <property type="project" value="UniProtKB"/>
</dbReference>
<dbReference type="GO" id="GO:0016435">
    <property type="term" value="F:rRNA (guanine) methyltransferase activity"/>
    <property type="evidence" value="ECO:0000250"/>
    <property type="project" value="UniProtKB"/>
</dbReference>
<dbReference type="GO" id="GO:0006325">
    <property type="term" value="P:chromatin organization"/>
    <property type="evidence" value="ECO:0007669"/>
    <property type="project" value="UniProtKB-KW"/>
</dbReference>
<dbReference type="GO" id="GO:2000234">
    <property type="term" value="P:positive regulation of rRNA processing"/>
    <property type="evidence" value="ECO:0000250"/>
    <property type="project" value="UniProtKB"/>
</dbReference>
<dbReference type="GO" id="GO:0070476">
    <property type="term" value="P:rRNA (guanine-N7)-methylation"/>
    <property type="evidence" value="ECO:0000250"/>
    <property type="project" value="UniProtKB"/>
</dbReference>
<dbReference type="CDD" id="cd02440">
    <property type="entry name" value="AdoMet_MTases"/>
    <property type="match status" value="1"/>
</dbReference>
<dbReference type="FunFam" id="3.40.50.150:FF:000017">
    <property type="entry name" value="probable 18S rRNA (Guanine-N(7))-methyltransferase"/>
    <property type="match status" value="1"/>
</dbReference>
<dbReference type="Gene3D" id="3.40.50.150">
    <property type="entry name" value="Vaccinia Virus protein VP39"/>
    <property type="match status" value="1"/>
</dbReference>
<dbReference type="InterPro" id="IPR039769">
    <property type="entry name" value="Bud23-like"/>
</dbReference>
<dbReference type="InterPro" id="IPR022238">
    <property type="entry name" value="Bud23_C"/>
</dbReference>
<dbReference type="InterPro" id="IPR013216">
    <property type="entry name" value="Methyltransf_11"/>
</dbReference>
<dbReference type="InterPro" id="IPR029063">
    <property type="entry name" value="SAM-dependent_MTases_sf"/>
</dbReference>
<dbReference type="PANTHER" id="PTHR12734:SF0">
    <property type="entry name" value="18S RRNA (GUANINE-N(7))-METHYLTRANSFERASE-RELATED"/>
    <property type="match status" value="1"/>
</dbReference>
<dbReference type="PANTHER" id="PTHR12734">
    <property type="entry name" value="METHYLTRANSFERASE-RELATED"/>
    <property type="match status" value="1"/>
</dbReference>
<dbReference type="Pfam" id="PF08241">
    <property type="entry name" value="Methyltransf_11"/>
    <property type="match status" value="1"/>
</dbReference>
<dbReference type="Pfam" id="PF12589">
    <property type="entry name" value="WBS_methylT"/>
    <property type="match status" value="1"/>
</dbReference>
<dbReference type="SUPFAM" id="SSF53335">
    <property type="entry name" value="S-adenosyl-L-methionine-dependent methyltransferases"/>
    <property type="match status" value="1"/>
</dbReference>
<feature type="chain" id="PRO_0000204451" description="18S rRNA (guanine-N(7))-methyltransferase">
    <location>
        <begin position="1"/>
        <end position="281"/>
    </location>
</feature>
<feature type="region of interest" description="Disordered" evidence="3">
    <location>
        <begin position="212"/>
        <end position="281"/>
    </location>
</feature>
<feature type="compositionally biased region" description="Polar residues" evidence="3">
    <location>
        <begin position="212"/>
        <end position="231"/>
    </location>
</feature>
<feature type="compositionally biased region" description="Basic and acidic residues" evidence="3">
    <location>
        <begin position="242"/>
        <end position="256"/>
    </location>
</feature>
<keyword id="KW-0156">Chromatin regulator</keyword>
<keyword id="KW-0963">Cytoplasm</keyword>
<keyword id="KW-0489">Methyltransferase</keyword>
<keyword id="KW-0539">Nucleus</keyword>
<keyword id="KW-1185">Reference proteome</keyword>
<keyword id="KW-0690">Ribosome biogenesis</keyword>
<keyword id="KW-0698">rRNA processing</keyword>
<keyword id="KW-0949">S-adenosyl-L-methionine</keyword>
<keyword id="KW-0804">Transcription</keyword>
<keyword id="KW-0805">Transcription regulation</keyword>
<keyword id="KW-0808">Transferase</keyword>
<keyword id="KW-0832">Ubl conjugation</keyword>
<protein>
    <recommendedName>
        <fullName evidence="4">18S rRNA (guanine-N(7))-methyltransferase</fullName>
        <ecNumber evidence="1">2.1.1.-</ecNumber>
    </recommendedName>
    <alternativeName>
        <fullName>Bud site selection protein 23 homolog</fullName>
    </alternativeName>
    <alternativeName>
        <fullName>Williams-Beuren syndrome chromosomal region 22 protein homolog</fullName>
    </alternativeName>
    <alternativeName>
        <fullName evidence="1">rRNA methyltransferase and ribosome maturation factor</fullName>
    </alternativeName>
</protein>
<name>BUD23_MOUSE</name>
<sequence>MASRSRRPEHSGPPELFYDQNEARKYVRNSRMIDIQTKMTERALELLCLPEGQPSYLLDIGCGSGLSGDYISEEGHYWVGIDISPAMLDAALDRDTEGDLLLGDMGQGVPFRPGSFDGCISISAVQWLCNANKKSDVPARRLYCFFSSLYSALVRGARAVLQLYPENSEQLELITTQATRAGFTGGVVVDFPNSAKAKKFYLCLFSGPSTSLPKGLTESQDADQASESMFTSERAPHKKARRDLVKKSREWVLEKKERRRRQGKEVRPDTQYTGRKRKPRF</sequence>
<comment type="function">
    <text evidence="1">S-adenosyl-L-methionine-dependent methyltransferase that specifically methylates the N(7) position of a guanine in 18S rRNA. Requires the methyltransferase adapter protein TRM112 for full rRNA methyltransferase activity. Involved in the pre-rRNA processing steps leading to small-subunit rRNA production independently of its RNA-modifying catalytic activity. Important for biogenesis end export of the 40S ribosomal subunit independent on its methyltransferase activity. Locus-specific steroid receptor coactivator. Potentiates transactivation by glucocorticoid (NR3C1), mineralocorticoid (NR3C2), androgen (AR) and progesterone (PGR) receptors. Required for the maintenance of open chromatin at the TSC22D3/GILZ locus to facilitate NR3C1 loading on the response elements. Required for maintenance of dimethylation on histone H3 'Lys-79' (H3K79me2), although direct histone methyltransferase activity is not observed in vitro.</text>
</comment>
<comment type="catalytic activity">
    <reaction evidence="1">
        <text>a guanosine in 18S rRNA + S-adenosyl-L-methionine = an N(7)-methylguanosine in 18S rRNA + S-adenosyl-L-homocysteine</text>
        <dbReference type="Rhea" id="RHEA:54584"/>
        <dbReference type="Rhea" id="RHEA-COMP:13937"/>
        <dbReference type="Rhea" id="RHEA-COMP:13938"/>
        <dbReference type="ChEBI" id="CHEBI:57856"/>
        <dbReference type="ChEBI" id="CHEBI:59789"/>
        <dbReference type="ChEBI" id="CHEBI:74269"/>
        <dbReference type="ChEBI" id="CHEBI:74480"/>
    </reaction>
</comment>
<comment type="subunit">
    <text evidence="1">Heterodimer with TRMT112; this heterodimerization is necessary for the metabolic stability and activity of the catalytic subunit BUD23. Interacts with GRIP1.</text>
</comment>
<comment type="subcellular location">
    <subcellularLocation>
        <location evidence="1">Nucleus</location>
    </subcellularLocation>
    <subcellularLocation>
        <location evidence="2">Nucleus</location>
        <location evidence="2">Nucleoplasm</location>
    </subcellularLocation>
    <subcellularLocation>
        <location evidence="1">Cytoplasm</location>
        <location evidence="1">Perinuclear region</location>
    </subcellularLocation>
    <subcellularLocation>
        <location evidence="1">Cytoplasm</location>
    </subcellularLocation>
    <text evidence="1">Localized diffusely throughout the nucleus and the cytoplasm. Localizes to a polarized perinuclear structure, overlapping partially with the Golgi and lysosomes. Localization is not affected by glucocorticoid treatment.</text>
</comment>
<comment type="PTM">
    <text evidence="1">May be ubiquitinated and targeted to degradation in response to pro-inflammatory cytokine signaling.</text>
</comment>
<comment type="similarity">
    <text evidence="4">Belongs to the class I-like SAM-binding methyltransferase superfamily. BUD23/WBSCR22 family.</text>
</comment>
<evidence type="ECO:0000250" key="1">
    <source>
        <dbReference type="UniProtKB" id="O43709"/>
    </source>
</evidence>
<evidence type="ECO:0000250" key="2">
    <source>
        <dbReference type="UniProtKB" id="P25627"/>
    </source>
</evidence>
<evidence type="ECO:0000256" key="3">
    <source>
        <dbReference type="SAM" id="MobiDB-lite"/>
    </source>
</evidence>
<evidence type="ECO:0000305" key="4"/>
<proteinExistence type="evidence at protein level"/>
<reference key="1">
    <citation type="journal article" date="2002" name="Hum. Genet.">
        <title>Identification of additional transcripts in the Williams-Beuren syndrome critical region.</title>
        <authorList>
            <person name="Merla G."/>
            <person name="Ucla C."/>
            <person name="Guipponi M."/>
            <person name="Reymond A."/>
        </authorList>
    </citation>
    <scope>NUCLEOTIDE SEQUENCE [MRNA]</scope>
</reference>
<reference key="2">
    <citation type="journal article" date="2005" name="Science">
        <title>The transcriptional landscape of the mammalian genome.</title>
        <authorList>
            <person name="Carninci P."/>
            <person name="Kasukawa T."/>
            <person name="Katayama S."/>
            <person name="Gough J."/>
            <person name="Frith M.C."/>
            <person name="Maeda N."/>
            <person name="Oyama R."/>
            <person name="Ravasi T."/>
            <person name="Lenhard B."/>
            <person name="Wells C."/>
            <person name="Kodzius R."/>
            <person name="Shimokawa K."/>
            <person name="Bajic V.B."/>
            <person name="Brenner S.E."/>
            <person name="Batalov S."/>
            <person name="Forrest A.R."/>
            <person name="Zavolan M."/>
            <person name="Davis M.J."/>
            <person name="Wilming L.G."/>
            <person name="Aidinis V."/>
            <person name="Allen J.E."/>
            <person name="Ambesi-Impiombato A."/>
            <person name="Apweiler R."/>
            <person name="Aturaliya R.N."/>
            <person name="Bailey T.L."/>
            <person name="Bansal M."/>
            <person name="Baxter L."/>
            <person name="Beisel K.W."/>
            <person name="Bersano T."/>
            <person name="Bono H."/>
            <person name="Chalk A.M."/>
            <person name="Chiu K.P."/>
            <person name="Choudhary V."/>
            <person name="Christoffels A."/>
            <person name="Clutterbuck D.R."/>
            <person name="Crowe M.L."/>
            <person name="Dalla E."/>
            <person name="Dalrymple B.P."/>
            <person name="de Bono B."/>
            <person name="Della Gatta G."/>
            <person name="di Bernardo D."/>
            <person name="Down T."/>
            <person name="Engstrom P."/>
            <person name="Fagiolini M."/>
            <person name="Faulkner G."/>
            <person name="Fletcher C.F."/>
            <person name="Fukushima T."/>
            <person name="Furuno M."/>
            <person name="Futaki S."/>
            <person name="Gariboldi M."/>
            <person name="Georgii-Hemming P."/>
            <person name="Gingeras T.R."/>
            <person name="Gojobori T."/>
            <person name="Green R.E."/>
            <person name="Gustincich S."/>
            <person name="Harbers M."/>
            <person name="Hayashi Y."/>
            <person name="Hensch T.K."/>
            <person name="Hirokawa N."/>
            <person name="Hill D."/>
            <person name="Huminiecki L."/>
            <person name="Iacono M."/>
            <person name="Ikeo K."/>
            <person name="Iwama A."/>
            <person name="Ishikawa T."/>
            <person name="Jakt M."/>
            <person name="Kanapin A."/>
            <person name="Katoh M."/>
            <person name="Kawasawa Y."/>
            <person name="Kelso J."/>
            <person name="Kitamura H."/>
            <person name="Kitano H."/>
            <person name="Kollias G."/>
            <person name="Krishnan S.P."/>
            <person name="Kruger A."/>
            <person name="Kummerfeld S.K."/>
            <person name="Kurochkin I.V."/>
            <person name="Lareau L.F."/>
            <person name="Lazarevic D."/>
            <person name="Lipovich L."/>
            <person name="Liu J."/>
            <person name="Liuni S."/>
            <person name="McWilliam S."/>
            <person name="Madan Babu M."/>
            <person name="Madera M."/>
            <person name="Marchionni L."/>
            <person name="Matsuda H."/>
            <person name="Matsuzawa S."/>
            <person name="Miki H."/>
            <person name="Mignone F."/>
            <person name="Miyake S."/>
            <person name="Morris K."/>
            <person name="Mottagui-Tabar S."/>
            <person name="Mulder N."/>
            <person name="Nakano N."/>
            <person name="Nakauchi H."/>
            <person name="Ng P."/>
            <person name="Nilsson R."/>
            <person name="Nishiguchi S."/>
            <person name="Nishikawa S."/>
            <person name="Nori F."/>
            <person name="Ohara O."/>
            <person name="Okazaki Y."/>
            <person name="Orlando V."/>
            <person name="Pang K.C."/>
            <person name="Pavan W.J."/>
            <person name="Pavesi G."/>
            <person name="Pesole G."/>
            <person name="Petrovsky N."/>
            <person name="Piazza S."/>
            <person name="Reed J."/>
            <person name="Reid J.F."/>
            <person name="Ring B.Z."/>
            <person name="Ringwald M."/>
            <person name="Rost B."/>
            <person name="Ruan Y."/>
            <person name="Salzberg S.L."/>
            <person name="Sandelin A."/>
            <person name="Schneider C."/>
            <person name="Schoenbach C."/>
            <person name="Sekiguchi K."/>
            <person name="Semple C.A."/>
            <person name="Seno S."/>
            <person name="Sessa L."/>
            <person name="Sheng Y."/>
            <person name="Shibata Y."/>
            <person name="Shimada H."/>
            <person name="Shimada K."/>
            <person name="Silva D."/>
            <person name="Sinclair B."/>
            <person name="Sperling S."/>
            <person name="Stupka E."/>
            <person name="Sugiura K."/>
            <person name="Sultana R."/>
            <person name="Takenaka Y."/>
            <person name="Taki K."/>
            <person name="Tammoja K."/>
            <person name="Tan S.L."/>
            <person name="Tang S."/>
            <person name="Taylor M.S."/>
            <person name="Tegner J."/>
            <person name="Teichmann S.A."/>
            <person name="Ueda H.R."/>
            <person name="van Nimwegen E."/>
            <person name="Verardo R."/>
            <person name="Wei C.L."/>
            <person name="Yagi K."/>
            <person name="Yamanishi H."/>
            <person name="Zabarovsky E."/>
            <person name="Zhu S."/>
            <person name="Zimmer A."/>
            <person name="Hide W."/>
            <person name="Bult C."/>
            <person name="Grimmond S.M."/>
            <person name="Teasdale R.D."/>
            <person name="Liu E.T."/>
            <person name="Brusic V."/>
            <person name="Quackenbush J."/>
            <person name="Wahlestedt C."/>
            <person name="Mattick J.S."/>
            <person name="Hume D.A."/>
            <person name="Kai C."/>
            <person name="Sasaki D."/>
            <person name="Tomaru Y."/>
            <person name="Fukuda S."/>
            <person name="Kanamori-Katayama M."/>
            <person name="Suzuki M."/>
            <person name="Aoki J."/>
            <person name="Arakawa T."/>
            <person name="Iida J."/>
            <person name="Imamura K."/>
            <person name="Itoh M."/>
            <person name="Kato T."/>
            <person name="Kawaji H."/>
            <person name="Kawagashira N."/>
            <person name="Kawashima T."/>
            <person name="Kojima M."/>
            <person name="Kondo S."/>
            <person name="Konno H."/>
            <person name="Nakano K."/>
            <person name="Ninomiya N."/>
            <person name="Nishio T."/>
            <person name="Okada M."/>
            <person name="Plessy C."/>
            <person name="Shibata K."/>
            <person name="Shiraki T."/>
            <person name="Suzuki S."/>
            <person name="Tagami M."/>
            <person name="Waki K."/>
            <person name="Watahiki A."/>
            <person name="Okamura-Oho Y."/>
            <person name="Suzuki H."/>
            <person name="Kawai J."/>
            <person name="Hayashizaki Y."/>
        </authorList>
    </citation>
    <scope>NUCLEOTIDE SEQUENCE [LARGE SCALE MRNA]</scope>
    <source>
        <strain>C57BL/6J</strain>
        <tissue>Bone marrow</tissue>
        <tissue>Embryonic liver</tissue>
    </source>
</reference>
<reference key="3">
    <citation type="journal article" date="2010" name="Cell">
        <title>A tissue-specific atlas of mouse protein phosphorylation and expression.</title>
        <authorList>
            <person name="Huttlin E.L."/>
            <person name="Jedrychowski M.P."/>
            <person name="Elias J.E."/>
            <person name="Goswami T."/>
            <person name="Rad R."/>
            <person name="Beausoleil S.A."/>
            <person name="Villen J."/>
            <person name="Haas W."/>
            <person name="Sowa M.E."/>
            <person name="Gygi S.P."/>
        </authorList>
    </citation>
    <scope>IDENTIFICATION BY MASS SPECTROMETRY [LARGE SCALE ANALYSIS]</scope>
    <source>
        <tissue>Pancreas</tissue>
        <tissue>Spleen</tissue>
    </source>
</reference>
<organism>
    <name type="scientific">Mus musculus</name>
    <name type="common">Mouse</name>
    <dbReference type="NCBI Taxonomy" id="10090"/>
    <lineage>
        <taxon>Eukaryota</taxon>
        <taxon>Metazoa</taxon>
        <taxon>Chordata</taxon>
        <taxon>Craniata</taxon>
        <taxon>Vertebrata</taxon>
        <taxon>Euteleostomi</taxon>
        <taxon>Mammalia</taxon>
        <taxon>Eutheria</taxon>
        <taxon>Euarchontoglires</taxon>
        <taxon>Glires</taxon>
        <taxon>Rodentia</taxon>
        <taxon>Myomorpha</taxon>
        <taxon>Muroidea</taxon>
        <taxon>Muridae</taxon>
        <taxon>Murinae</taxon>
        <taxon>Mus</taxon>
        <taxon>Mus</taxon>
    </lineage>
</organism>
<gene>
    <name evidence="1" type="primary">Bud23</name>
    <name type="synonym">Wbscr22</name>
</gene>
<accession>Q9CY21</accession>
<accession>Q3U915</accession>